<accession>Q7VLY3</accession>
<proteinExistence type="inferred from homology"/>
<organism>
    <name type="scientific">Haemophilus ducreyi (strain 35000HP / ATCC 700724)</name>
    <dbReference type="NCBI Taxonomy" id="233412"/>
    <lineage>
        <taxon>Bacteria</taxon>
        <taxon>Pseudomonadati</taxon>
        <taxon>Pseudomonadota</taxon>
        <taxon>Gammaproteobacteria</taxon>
        <taxon>Pasteurellales</taxon>
        <taxon>Pasteurellaceae</taxon>
        <taxon>Haemophilus</taxon>
    </lineage>
</organism>
<evidence type="ECO:0000255" key="1">
    <source>
        <dbReference type="HAMAP-Rule" id="MF_01582"/>
    </source>
</evidence>
<name>SSTT_HAEDU</name>
<keyword id="KW-0029">Amino-acid transport</keyword>
<keyword id="KW-0997">Cell inner membrane</keyword>
<keyword id="KW-1003">Cell membrane</keyword>
<keyword id="KW-0472">Membrane</keyword>
<keyword id="KW-1185">Reference proteome</keyword>
<keyword id="KW-0769">Symport</keyword>
<keyword id="KW-0812">Transmembrane</keyword>
<keyword id="KW-1133">Transmembrane helix</keyword>
<keyword id="KW-0813">Transport</keyword>
<dbReference type="EMBL" id="AE017143">
    <property type="protein sequence ID" value="AAP96087.1"/>
    <property type="molecule type" value="Genomic_DNA"/>
</dbReference>
<dbReference type="RefSeq" id="WP_010945136.1">
    <property type="nucleotide sequence ID" value="NC_002940.2"/>
</dbReference>
<dbReference type="SMR" id="Q7VLY3"/>
<dbReference type="STRING" id="233412.HD_1254"/>
<dbReference type="KEGG" id="hdu:HD_1254"/>
<dbReference type="eggNOG" id="COG3633">
    <property type="taxonomic scope" value="Bacteria"/>
</dbReference>
<dbReference type="HOGENOM" id="CLU_044581_0_0_6"/>
<dbReference type="OrthoDB" id="9768885at2"/>
<dbReference type="Proteomes" id="UP000001022">
    <property type="component" value="Chromosome"/>
</dbReference>
<dbReference type="GO" id="GO:0005886">
    <property type="term" value="C:plasma membrane"/>
    <property type="evidence" value="ECO:0007669"/>
    <property type="project" value="UniProtKB-SubCell"/>
</dbReference>
<dbReference type="GO" id="GO:0005295">
    <property type="term" value="F:neutral L-amino acid:sodium symporter activity"/>
    <property type="evidence" value="ECO:0007669"/>
    <property type="project" value="TreeGrafter"/>
</dbReference>
<dbReference type="GO" id="GO:0032329">
    <property type="term" value="P:serine transport"/>
    <property type="evidence" value="ECO:0007669"/>
    <property type="project" value="InterPro"/>
</dbReference>
<dbReference type="GO" id="GO:0015826">
    <property type="term" value="P:threonine transport"/>
    <property type="evidence" value="ECO:0007669"/>
    <property type="project" value="InterPro"/>
</dbReference>
<dbReference type="FunFam" id="1.10.3860.10:FF:000003">
    <property type="entry name" value="Serine/threonine transporter sstT"/>
    <property type="match status" value="1"/>
</dbReference>
<dbReference type="Gene3D" id="1.10.3860.10">
    <property type="entry name" value="Sodium:dicarboxylate symporter"/>
    <property type="match status" value="1"/>
</dbReference>
<dbReference type="HAMAP" id="MF_01582">
    <property type="entry name" value="Ser_Thr_transp_SstT"/>
    <property type="match status" value="1"/>
</dbReference>
<dbReference type="InterPro" id="IPR001991">
    <property type="entry name" value="Na-dicarboxylate_symporter"/>
</dbReference>
<dbReference type="InterPro" id="IPR036458">
    <property type="entry name" value="Na:dicarbo_symporter_sf"/>
</dbReference>
<dbReference type="InterPro" id="IPR023025">
    <property type="entry name" value="Ser_Thr_transp_SstT"/>
</dbReference>
<dbReference type="NCBIfam" id="NF010151">
    <property type="entry name" value="PRK13628.1"/>
    <property type="match status" value="1"/>
</dbReference>
<dbReference type="PANTHER" id="PTHR42865">
    <property type="entry name" value="PROTON/GLUTAMATE-ASPARTATE SYMPORTER"/>
    <property type="match status" value="1"/>
</dbReference>
<dbReference type="PANTHER" id="PTHR42865:SF8">
    <property type="entry name" value="SERINE_THREONINE TRANSPORTER SSTT"/>
    <property type="match status" value="1"/>
</dbReference>
<dbReference type="Pfam" id="PF00375">
    <property type="entry name" value="SDF"/>
    <property type="match status" value="1"/>
</dbReference>
<dbReference type="PRINTS" id="PR00173">
    <property type="entry name" value="EDTRNSPORT"/>
</dbReference>
<dbReference type="SUPFAM" id="SSF118215">
    <property type="entry name" value="Proton glutamate symport protein"/>
    <property type="match status" value="1"/>
</dbReference>
<protein>
    <recommendedName>
        <fullName evidence="1">Serine/threonine transporter SstT</fullName>
    </recommendedName>
    <alternativeName>
        <fullName evidence="1">Na(+)/serine-threonine symporter</fullName>
    </alternativeName>
</protein>
<reference key="1">
    <citation type="submission" date="2003-06" db="EMBL/GenBank/DDBJ databases">
        <title>The complete genome sequence of Haemophilus ducreyi.</title>
        <authorList>
            <person name="Munson R.S. Jr."/>
            <person name="Ray W.C."/>
            <person name="Mahairas G."/>
            <person name="Sabo P."/>
            <person name="Mungur R."/>
            <person name="Johnson L."/>
            <person name="Nguyen D."/>
            <person name="Wang J."/>
            <person name="Forst C."/>
            <person name="Hood L."/>
        </authorList>
    </citation>
    <scope>NUCLEOTIDE SEQUENCE [LARGE SCALE GENOMIC DNA]</scope>
    <source>
        <strain>35000HP / ATCC 700724</strain>
    </source>
</reference>
<feature type="chain" id="PRO_0000309091" description="Serine/threonine transporter SstT">
    <location>
        <begin position="1"/>
        <end position="403"/>
    </location>
</feature>
<feature type="transmembrane region" description="Helical" evidence="1">
    <location>
        <begin position="11"/>
        <end position="31"/>
    </location>
</feature>
<feature type="transmembrane region" description="Helical" evidence="1">
    <location>
        <begin position="51"/>
        <end position="71"/>
    </location>
</feature>
<feature type="transmembrane region" description="Helical" evidence="1">
    <location>
        <begin position="81"/>
        <end position="101"/>
    </location>
</feature>
<feature type="transmembrane region" description="Helical" evidence="1">
    <location>
        <begin position="138"/>
        <end position="158"/>
    </location>
</feature>
<feature type="transmembrane region" description="Helical" evidence="1">
    <location>
        <begin position="175"/>
        <end position="195"/>
    </location>
</feature>
<feature type="transmembrane region" description="Helical" evidence="1">
    <location>
        <begin position="213"/>
        <end position="233"/>
    </location>
</feature>
<feature type="transmembrane region" description="Helical" evidence="1">
    <location>
        <begin position="285"/>
        <end position="305"/>
    </location>
</feature>
<feature type="transmembrane region" description="Helical" evidence="1">
    <location>
        <begin position="319"/>
        <end position="339"/>
    </location>
</feature>
<sequence>MSNLSSKLFRGNLVIRIAIGLVLGVLLAFISPEWAKSVGVLGQFFVKSLRAIAPILVFVLVLSAIANKEVGTDAKLKPILVMYVLGTFLAALTAVVFSFIFPTRLELVSSPGDLTPPQGIGEIIKTVVFNLVDNPLQALANANFIGILAWAIGLGIPLRYAAPSTKIFLNDLSEAVSYVVKMVISVAPIGVFGLVAETIATNGMNAFIGYARLLGVLLGAMMTVIFVLDPILVYWKIRRNPYPLTFICLRESGLTAFFTRSSAANIPVNMNLAKRLGVRDEIASVAIPLGATINMAGAAITVTVLTLAAAYTQGIYPDFMTALLLSIVASICACGASGVSGGSLLLIPLACSLFNIPNDIAAQVIGVGFIIGVIQDSAETALNSSTDVLFTTAVSQAEDRKES</sequence>
<comment type="function">
    <text evidence="1">Involved in the import of serine and threonine into the cell, with the concomitant import of sodium (symport system).</text>
</comment>
<comment type="catalytic activity">
    <reaction evidence="1">
        <text>L-serine(in) + Na(+)(in) = L-serine(out) + Na(+)(out)</text>
        <dbReference type="Rhea" id="RHEA:29575"/>
        <dbReference type="ChEBI" id="CHEBI:29101"/>
        <dbReference type="ChEBI" id="CHEBI:33384"/>
    </reaction>
    <physiologicalReaction direction="right-to-left" evidence="1">
        <dbReference type="Rhea" id="RHEA:29577"/>
    </physiologicalReaction>
</comment>
<comment type="catalytic activity">
    <reaction evidence="1">
        <text>L-threonine(in) + Na(+)(in) = L-threonine(out) + Na(+)(out)</text>
        <dbReference type="Rhea" id="RHEA:69999"/>
        <dbReference type="ChEBI" id="CHEBI:29101"/>
        <dbReference type="ChEBI" id="CHEBI:57926"/>
    </reaction>
    <physiologicalReaction direction="right-to-left" evidence="1">
        <dbReference type="Rhea" id="RHEA:70001"/>
    </physiologicalReaction>
</comment>
<comment type="subcellular location">
    <subcellularLocation>
        <location evidence="1">Cell inner membrane</location>
        <topology evidence="1">Multi-pass membrane protein</topology>
    </subcellularLocation>
</comment>
<comment type="similarity">
    <text evidence="1">Belongs to the dicarboxylate/amino acid:cation symporter (DAACS) (TC 2.A.23) family.</text>
</comment>
<gene>
    <name evidence="1" type="primary">sstT</name>
    <name type="ordered locus">HD_1254</name>
</gene>